<organism>
    <name type="scientific">Pongo abelii</name>
    <name type="common">Sumatran orangutan</name>
    <name type="synonym">Pongo pygmaeus abelii</name>
    <dbReference type="NCBI Taxonomy" id="9601"/>
    <lineage>
        <taxon>Eukaryota</taxon>
        <taxon>Metazoa</taxon>
        <taxon>Chordata</taxon>
        <taxon>Craniata</taxon>
        <taxon>Vertebrata</taxon>
        <taxon>Euteleostomi</taxon>
        <taxon>Mammalia</taxon>
        <taxon>Eutheria</taxon>
        <taxon>Euarchontoglires</taxon>
        <taxon>Primates</taxon>
        <taxon>Haplorrhini</taxon>
        <taxon>Catarrhini</taxon>
        <taxon>Hominidae</taxon>
        <taxon>Pongo</taxon>
    </lineage>
</organism>
<sequence>MNLGDGLKLETELLDGKTKLILSPYEHKSKISVKMGNKAKIAKCPLRTKTGHILKSTQDTCIGSEKLLQKKTVGSETSQAKGEKNGMTFSSTKDLCKQCIDKDCLHIQKEISPATPNMQKTRNTVNTSLVGKQKPHKKHITAENMKSNLVCLTQEQLQQILMTVNQGNRSLSLTENGKEAKSQYSLHLNSISNQPKDENIMGLFKKTEMVSSVPAENKSVLNEHQETSKQCEQKIAIENEWKPADIFSTLGERERDRSLLEAKKAQWRKELDEQVALKKKEKEVSEKWNDPWKKSESDKIIWEKHQILDQSRETVLLEHAFSAVKQELQRKWIEELNKQIEDDRQRKIEEKIIYSKGEEHDRWAMHFDSLKSYPGSQSQLSSRSTHKQPEYFCVSPDTQELADVSSVCTPTTGSQVEPSEEEHIAKPIKDVVMANSKKTNFLRSMTALLDPAQIEERDRRRQKQLEHQKAITAQVEEKCRKKQLEEEQRKKEEQEEELRLAQEREEMQKQYEEDILKQKQKEEIMTLKTNELFQTMQRAQELAQRLKQEQRIRELAQKGHDTSRLIKNLGVDTIQIEYNASNISNSRHDSDEVSGKMNTYMNSTTSPKKDTGVQTDDLNIGIFTNAESHCGSLMERDITNCSSPEISAELIGQFSTKKNKQELTQDKGASLEKENNRCNDQCNQFTRIDKQTKHMKKYPKRPDWNINKPPKRYIPASEKYPKQLQKQREEKEVRRQMELLHLVEKNNPGHLSQNRGISPEIFHSSHQETESKFRWHLVKKEEEPLNIHSFSKERSPSSPVPAVKNRTQQTQNTLHLPLKNSSYERENLISGGNQTELSSGISESSHFIPYVRTNEIYYLDPDAPLSGPSTQDPQYQNSQDCGQERQLFDSDCVRDPLLNPNMVKNRDRQQAILKGLSELRQGLLQKQKELESSLLPLAENQEENFGSSF</sequence>
<accession>Q5RBD6</accession>
<name>CCD66_PONAB</name>
<reference key="1">
    <citation type="submission" date="2004-11" db="EMBL/GenBank/DDBJ databases">
        <authorList>
            <consortium name="The German cDNA consortium"/>
        </authorList>
    </citation>
    <scope>NUCLEOTIDE SEQUENCE [LARGE SCALE MRNA]</scope>
    <source>
        <tissue>Heart</tissue>
    </source>
</reference>
<protein>
    <recommendedName>
        <fullName evidence="5">Coiled-coil domain-containing protein 66</fullName>
    </recommendedName>
</protein>
<gene>
    <name evidence="1" type="primary">CCDC66</name>
</gene>
<evidence type="ECO:0000250" key="1">
    <source>
        <dbReference type="UniProtKB" id="A2RUB6"/>
    </source>
</evidence>
<evidence type="ECO:0000250" key="2">
    <source>
        <dbReference type="UniProtKB" id="Q6NS45"/>
    </source>
</evidence>
<evidence type="ECO:0000255" key="3"/>
<evidence type="ECO:0000256" key="4">
    <source>
        <dbReference type="SAM" id="MobiDB-lite"/>
    </source>
</evidence>
<evidence type="ECO:0000305" key="5"/>
<keyword id="KW-0131">Cell cycle</keyword>
<keyword id="KW-0132">Cell division</keyword>
<keyword id="KW-0966">Cell projection</keyword>
<keyword id="KW-0969">Cilium</keyword>
<keyword id="KW-0970">Cilium biogenesis/degradation</keyword>
<keyword id="KW-0175">Coiled coil</keyword>
<keyword id="KW-0963">Cytoplasm</keyword>
<keyword id="KW-0206">Cytoskeleton</keyword>
<keyword id="KW-1015">Disulfide bond</keyword>
<keyword id="KW-0493">Microtubule</keyword>
<keyword id="KW-0597">Phosphoprotein</keyword>
<keyword id="KW-1185">Reference proteome</keyword>
<comment type="function">
    <text evidence="1 2">Microtubule-binding protein required for ciliogenesis. May function in ciliogenesis by mediating the transport of proteins like BBS4 to the cilium, but also through the organization of the centriolar satellites. Required for the assembly of signaling-competent cilia with proper structure and length. Mediates this function in part by regulating transition zone assembly and basal body recruitment of the IFT-B complex. Cooperates with the ciliopathy proteins CSPP1 and CEP104 during cilium length regulation. Plays two important roles during cell division. First, is required for mitotic progression via regulation of spindle assembly, organization and orientation, levels of spindle microtubules (MTs), kinetochore-fiber integrity, and chromosome alignment. Second, functions during cytokinesis in part by regulating assembly and organization of central spindle and midbody MTs Plays a role in retina morphogenesis and/or homeostasis.</text>
</comment>
<comment type="subunit">
    <text evidence="1 2">Homodimer; disulfide-linked (By similarity). Interacts with CEP290 (By similarity). Interacts with PCM1 (By similarity). Interacts with ARMC9, TOGARAM1, CSPP1 and CEP104 (By similarity). Interacts with CDK5RAP2, CEP152, CEP192, TBG1 and PRC1 (By similarity).</text>
</comment>
<comment type="subcellular location">
    <subcellularLocation>
        <location evidence="1">Cytoplasm</location>
        <location evidence="1">Cytoskeleton</location>
        <location evidence="1">Microtubule organizing center</location>
        <location evidence="1">Centrosome</location>
    </subcellularLocation>
    <subcellularLocation>
        <location evidence="1">Cytoplasm</location>
        <location evidence="1">Cytoskeleton</location>
        <location evidence="1">Microtubule organizing center</location>
        <location evidence="1">Centrosome</location>
        <location evidence="1">Centriolar satellite</location>
    </subcellularLocation>
    <subcellularLocation>
        <location evidence="1">Cell projection</location>
        <location evidence="1">Cilium</location>
    </subcellularLocation>
    <subcellularLocation>
        <location evidence="1">Cytoplasm</location>
        <location evidence="1">Cytoskeleton</location>
        <location evidence="1">Cilium basal body</location>
    </subcellularLocation>
    <subcellularLocation>
        <location evidence="1">Cytoplasm</location>
        <location evidence="1">Cytoskeleton</location>
        <location evidence="1">Cilium axoneme</location>
    </subcellularLocation>
    <subcellularLocation>
        <location evidence="1">Photoreceptor inner segment</location>
    </subcellularLocation>
    <subcellularLocation>
        <location evidence="1">Cell projection</location>
        <location evidence="1">Cilium</location>
        <location evidence="1">Photoreceptor outer segment</location>
    </subcellularLocation>
    <text evidence="1">Restricted to the centrosomes and the spindle microtubules during mitosis. Enriched in the inner segment of the photoreceptor.</text>
</comment>
<feature type="chain" id="PRO_0000320039" description="Coiled-coil domain-containing protein 66">
    <location>
        <begin position="1"/>
        <end position="949"/>
    </location>
</feature>
<feature type="region of interest" description="Mediates localization to cilia, centrosomes and spindle microtubules and the interaction with PCM1, CEP290, CEP104 and CSPP1" evidence="1">
    <location>
        <begin position="570"/>
        <end position="949"/>
    </location>
</feature>
<feature type="region of interest" description="Disordered" evidence="4">
    <location>
        <begin position="691"/>
        <end position="714"/>
    </location>
</feature>
<feature type="region of interest" description="Disordered" evidence="4">
    <location>
        <begin position="789"/>
        <end position="809"/>
    </location>
</feature>
<feature type="coiled-coil region" evidence="3">
    <location>
        <begin position="474"/>
        <end position="558"/>
    </location>
</feature>
<feature type="modified residue" description="Phosphothreonine" evidence="1">
    <location>
        <position position="115"/>
    </location>
</feature>
<feature type="modified residue" description="Phosphothreonine" evidence="1">
    <location>
        <position position="121"/>
    </location>
</feature>
<feature type="modified residue" description="Phosphoserine" evidence="2">
    <location>
        <position position="369"/>
    </location>
</feature>
<feature type="modified residue" description="Phosphoserine" evidence="2">
    <location>
        <position position="606"/>
    </location>
</feature>
<proteinExistence type="evidence at transcript level"/>
<dbReference type="EMBL" id="CR858715">
    <property type="protein sequence ID" value="CAH90924.1"/>
    <property type="molecule type" value="mRNA"/>
</dbReference>
<dbReference type="RefSeq" id="NP_001125528.1">
    <property type="nucleotide sequence ID" value="NM_001132056.1"/>
</dbReference>
<dbReference type="SMR" id="Q5RBD6"/>
<dbReference type="FunCoup" id="Q5RBD6">
    <property type="interactions" value="950"/>
</dbReference>
<dbReference type="STRING" id="9601.ENSPPYP00000015416"/>
<dbReference type="GeneID" id="100172440"/>
<dbReference type="KEGG" id="pon:100172440"/>
<dbReference type="CTD" id="285331"/>
<dbReference type="eggNOG" id="ENOG502R1PQ">
    <property type="taxonomic scope" value="Eukaryota"/>
</dbReference>
<dbReference type="InParanoid" id="Q5RBD6"/>
<dbReference type="OrthoDB" id="10042846at2759"/>
<dbReference type="Proteomes" id="UP000001595">
    <property type="component" value="Unplaced"/>
</dbReference>
<dbReference type="GO" id="GO:0005930">
    <property type="term" value="C:axoneme"/>
    <property type="evidence" value="ECO:0000250"/>
    <property type="project" value="UniProtKB"/>
</dbReference>
<dbReference type="GO" id="GO:0034451">
    <property type="term" value="C:centriolar satellite"/>
    <property type="evidence" value="ECO:0000250"/>
    <property type="project" value="UniProtKB"/>
</dbReference>
<dbReference type="GO" id="GO:0005813">
    <property type="term" value="C:centrosome"/>
    <property type="evidence" value="ECO:0000250"/>
    <property type="project" value="UniProtKB"/>
</dbReference>
<dbReference type="GO" id="GO:0036064">
    <property type="term" value="C:ciliary basal body"/>
    <property type="evidence" value="ECO:0000250"/>
    <property type="project" value="UniProtKB"/>
</dbReference>
<dbReference type="GO" id="GO:0005929">
    <property type="term" value="C:cilium"/>
    <property type="evidence" value="ECO:0000250"/>
    <property type="project" value="UniProtKB"/>
</dbReference>
<dbReference type="GO" id="GO:0005874">
    <property type="term" value="C:microtubule"/>
    <property type="evidence" value="ECO:0000250"/>
    <property type="project" value="UniProtKB"/>
</dbReference>
<dbReference type="GO" id="GO:0030496">
    <property type="term" value="C:midbody"/>
    <property type="evidence" value="ECO:0000250"/>
    <property type="project" value="UniProtKB"/>
</dbReference>
<dbReference type="GO" id="GO:0001917">
    <property type="term" value="C:photoreceptor inner segment"/>
    <property type="evidence" value="ECO:0000250"/>
    <property type="project" value="UniProtKB"/>
</dbReference>
<dbReference type="GO" id="GO:0001750">
    <property type="term" value="C:photoreceptor outer segment"/>
    <property type="evidence" value="ECO:0007669"/>
    <property type="project" value="UniProtKB-SubCell"/>
</dbReference>
<dbReference type="GO" id="GO:0005819">
    <property type="term" value="C:spindle"/>
    <property type="evidence" value="ECO:0000250"/>
    <property type="project" value="UniProtKB"/>
</dbReference>
<dbReference type="GO" id="GO:0008017">
    <property type="term" value="F:microtubule binding"/>
    <property type="evidence" value="ECO:0000250"/>
    <property type="project" value="UniProtKB"/>
</dbReference>
<dbReference type="GO" id="GO:0042803">
    <property type="term" value="F:protein homodimerization activity"/>
    <property type="evidence" value="ECO:0000250"/>
    <property type="project" value="UniProtKB"/>
</dbReference>
<dbReference type="GO" id="GO:0051301">
    <property type="term" value="P:cell division"/>
    <property type="evidence" value="ECO:0007669"/>
    <property type="project" value="UniProtKB-KW"/>
</dbReference>
<dbReference type="GO" id="GO:1905349">
    <property type="term" value="P:ciliary transition zone assembly"/>
    <property type="evidence" value="ECO:0000250"/>
    <property type="project" value="UniProtKB"/>
</dbReference>
<dbReference type="GO" id="GO:0060271">
    <property type="term" value="P:cilium assembly"/>
    <property type="evidence" value="ECO:0000250"/>
    <property type="project" value="UniProtKB"/>
</dbReference>
<dbReference type="GO" id="GO:0000132">
    <property type="term" value="P:establishment of mitotic spindle orientation"/>
    <property type="evidence" value="ECO:0000250"/>
    <property type="project" value="UniProtKB"/>
</dbReference>
<dbReference type="GO" id="GO:0001578">
    <property type="term" value="P:microtubule bundle formation"/>
    <property type="evidence" value="ECO:0000250"/>
    <property type="project" value="UniProtKB"/>
</dbReference>
<dbReference type="GO" id="GO:1902850">
    <property type="term" value="P:microtubule cytoskeleton organization involved in mitosis"/>
    <property type="evidence" value="ECO:0000250"/>
    <property type="project" value="UniProtKB"/>
</dbReference>
<dbReference type="GO" id="GO:0007020">
    <property type="term" value="P:microtubule nucleation"/>
    <property type="evidence" value="ECO:0000250"/>
    <property type="project" value="UniProtKB"/>
</dbReference>
<dbReference type="GO" id="GO:0007080">
    <property type="term" value="P:mitotic metaphase chromosome alignment"/>
    <property type="evidence" value="ECO:0000250"/>
    <property type="project" value="UniProtKB"/>
</dbReference>
<dbReference type="GO" id="GO:0090307">
    <property type="term" value="P:mitotic spindle assembly"/>
    <property type="evidence" value="ECO:0000250"/>
    <property type="project" value="UniProtKB"/>
</dbReference>
<dbReference type="GO" id="GO:0007052">
    <property type="term" value="P:mitotic spindle organization"/>
    <property type="evidence" value="ECO:0000250"/>
    <property type="project" value="UniProtKB"/>
</dbReference>
<dbReference type="GO" id="GO:0032465">
    <property type="term" value="P:regulation of cytokinesis"/>
    <property type="evidence" value="ECO:0000250"/>
    <property type="project" value="UniProtKB"/>
</dbReference>
<dbReference type="GO" id="GO:1903564">
    <property type="term" value="P:regulation of protein localization to cilium"/>
    <property type="evidence" value="ECO:0000250"/>
    <property type="project" value="UniProtKB"/>
</dbReference>
<dbReference type="GO" id="GO:0001895">
    <property type="term" value="P:retina homeostasis"/>
    <property type="evidence" value="ECO:0000250"/>
    <property type="project" value="UniProtKB"/>
</dbReference>
<dbReference type="InterPro" id="IPR039183">
    <property type="entry name" value="CCD66"/>
</dbReference>
<dbReference type="InterPro" id="IPR040467">
    <property type="entry name" value="CCDC66_dom"/>
</dbReference>
<dbReference type="PANTHER" id="PTHR22736">
    <property type="entry name" value="COILED-COIL DOMAIN-CONTAINING PROTEIN 66"/>
    <property type="match status" value="1"/>
</dbReference>
<dbReference type="PANTHER" id="PTHR22736:SF2">
    <property type="entry name" value="COILED-COIL DOMAIN-CONTAINING PROTEIN 66"/>
    <property type="match status" value="1"/>
</dbReference>
<dbReference type="Pfam" id="PF15236">
    <property type="entry name" value="CCDC66"/>
    <property type="match status" value="1"/>
</dbReference>